<proteinExistence type="inferred from homology"/>
<gene>
    <name type="ordered locus">Pro_0144</name>
</gene>
<comment type="similarity">
    <text evidence="1">Belongs to the UPF0367 family.</text>
</comment>
<evidence type="ECO:0000255" key="1">
    <source>
        <dbReference type="HAMAP-Rule" id="MF_01360"/>
    </source>
</evidence>
<name>Y144_PROMA</name>
<accession>Q7VE69</accession>
<reference key="1">
    <citation type="journal article" date="2003" name="Proc. Natl. Acad. Sci. U.S.A.">
        <title>Genome sequence of the cyanobacterium Prochlorococcus marinus SS120, a nearly minimal oxyphototrophic genome.</title>
        <authorList>
            <person name="Dufresne A."/>
            <person name="Salanoubat M."/>
            <person name="Partensky F."/>
            <person name="Artiguenave F."/>
            <person name="Axmann I.M."/>
            <person name="Barbe V."/>
            <person name="Duprat S."/>
            <person name="Galperin M.Y."/>
            <person name="Koonin E.V."/>
            <person name="Le Gall F."/>
            <person name="Makarova K.S."/>
            <person name="Ostrowski M."/>
            <person name="Oztas S."/>
            <person name="Robert C."/>
            <person name="Rogozin I.B."/>
            <person name="Scanlan D.J."/>
            <person name="Tandeau de Marsac N."/>
            <person name="Weissenbach J."/>
            <person name="Wincker P."/>
            <person name="Wolf Y.I."/>
            <person name="Hess W.R."/>
        </authorList>
    </citation>
    <scope>NUCLEOTIDE SEQUENCE [LARGE SCALE GENOMIC DNA]</scope>
    <source>
        <strain>SARG / CCMP1375 / SS120</strain>
    </source>
</reference>
<feature type="chain" id="PRO_0000240495" description="UPF0367 protein Pro_0144">
    <location>
        <begin position="1"/>
        <end position="87"/>
    </location>
</feature>
<organism>
    <name type="scientific">Prochlorococcus marinus (strain SARG / CCMP1375 / SS120)</name>
    <dbReference type="NCBI Taxonomy" id="167539"/>
    <lineage>
        <taxon>Bacteria</taxon>
        <taxon>Bacillati</taxon>
        <taxon>Cyanobacteriota</taxon>
        <taxon>Cyanophyceae</taxon>
        <taxon>Synechococcales</taxon>
        <taxon>Prochlorococcaceae</taxon>
        <taxon>Prochlorococcus</taxon>
    </lineage>
</organism>
<keyword id="KW-1185">Reference proteome</keyword>
<sequence length="87" mass="9750">MYLIELALKLSPLPLSVQRKKLEDAKALYNQLKESLKKGDPRLLEISCEQVEDKKIAVLVSEVLAVQMYEKTAGAGGNRRPGFSFDE</sequence>
<protein>
    <recommendedName>
        <fullName evidence="1">UPF0367 protein Pro_0144</fullName>
    </recommendedName>
</protein>
<dbReference type="EMBL" id="AE017126">
    <property type="protein sequence ID" value="AAP99190.1"/>
    <property type="molecule type" value="Genomic_DNA"/>
</dbReference>
<dbReference type="RefSeq" id="NP_874538.1">
    <property type="nucleotide sequence ID" value="NC_005042.1"/>
</dbReference>
<dbReference type="RefSeq" id="WP_011124299.1">
    <property type="nucleotide sequence ID" value="NC_005042.1"/>
</dbReference>
<dbReference type="STRING" id="167539.Pro_0144"/>
<dbReference type="EnsemblBacteria" id="AAP99190">
    <property type="protein sequence ID" value="AAP99190"/>
    <property type="gene ID" value="Pro_0144"/>
</dbReference>
<dbReference type="KEGG" id="pma:Pro_0144"/>
<dbReference type="PATRIC" id="fig|167539.5.peg.150"/>
<dbReference type="eggNOG" id="ENOG5032YB3">
    <property type="taxonomic scope" value="Bacteria"/>
</dbReference>
<dbReference type="HOGENOM" id="CLU_180777_0_0_3"/>
<dbReference type="OrthoDB" id="516864at2"/>
<dbReference type="Proteomes" id="UP000001420">
    <property type="component" value="Chromosome"/>
</dbReference>
<dbReference type="HAMAP" id="MF_01360">
    <property type="entry name" value="UPF0367"/>
    <property type="match status" value="1"/>
</dbReference>
<dbReference type="InterPro" id="IPR020885">
    <property type="entry name" value="UPF0367"/>
</dbReference>
<dbReference type="NCBIfam" id="NF010236">
    <property type="entry name" value="PRK13683.1"/>
    <property type="match status" value="1"/>
</dbReference>